<protein>
    <recommendedName>
        <fullName evidence="1">Chromatin-remodeling ATPase INO80</fullName>
        <ecNumber evidence="1">3.6.4.-</ecNumber>
    </recommendedName>
</protein>
<proteinExistence type="inferred from homology"/>
<name>INO80_EREGS</name>
<evidence type="ECO:0000250" key="1">
    <source>
        <dbReference type="UniProtKB" id="P53115"/>
    </source>
</evidence>
<evidence type="ECO:0000250" key="2">
    <source>
        <dbReference type="UniProtKB" id="Q9ULG1"/>
    </source>
</evidence>
<evidence type="ECO:0000255" key="3"/>
<evidence type="ECO:0000255" key="4">
    <source>
        <dbReference type="PROSITE-ProRule" id="PRU00541"/>
    </source>
</evidence>
<evidence type="ECO:0000255" key="5">
    <source>
        <dbReference type="PROSITE-ProRule" id="PRU00542"/>
    </source>
</evidence>
<evidence type="ECO:0000255" key="6">
    <source>
        <dbReference type="PROSITE-ProRule" id="PRU00746"/>
    </source>
</evidence>
<evidence type="ECO:0000256" key="7">
    <source>
        <dbReference type="SAM" id="MobiDB-lite"/>
    </source>
</evidence>
<evidence type="ECO:0000305" key="8"/>
<organism>
    <name type="scientific">Eremothecium gossypii (strain ATCC 10895 / CBS 109.51 / FGSC 9923 / NRRL Y-1056)</name>
    <name type="common">Yeast</name>
    <name type="synonym">Ashbya gossypii</name>
    <dbReference type="NCBI Taxonomy" id="284811"/>
    <lineage>
        <taxon>Eukaryota</taxon>
        <taxon>Fungi</taxon>
        <taxon>Dikarya</taxon>
        <taxon>Ascomycota</taxon>
        <taxon>Saccharomycotina</taxon>
        <taxon>Saccharomycetes</taxon>
        <taxon>Saccharomycetales</taxon>
        <taxon>Saccharomycetaceae</taxon>
        <taxon>Eremothecium</taxon>
    </lineage>
</organism>
<gene>
    <name type="primary">INO80</name>
    <name type="ordered locus">AGR379W</name>
</gene>
<dbReference type="EC" id="3.6.4.-" evidence="1"/>
<dbReference type="EMBL" id="AE016820">
    <property type="protein sequence ID" value="AAS54869.2"/>
    <property type="molecule type" value="Genomic_DNA"/>
</dbReference>
<dbReference type="RefSeq" id="NP_987045.2">
    <property type="nucleotide sequence ID" value="NM_212107.2"/>
</dbReference>
<dbReference type="SMR" id="Q74Z27"/>
<dbReference type="FunCoup" id="Q74Z27">
    <property type="interactions" value="1192"/>
</dbReference>
<dbReference type="STRING" id="284811.Q74Z27"/>
<dbReference type="EnsemblFungi" id="AAS54869">
    <property type="protein sequence ID" value="AAS54869"/>
    <property type="gene ID" value="AGOS_AGR379W"/>
</dbReference>
<dbReference type="GeneID" id="4623349"/>
<dbReference type="KEGG" id="ago:AGOS_AGR379W"/>
<dbReference type="eggNOG" id="KOG0388">
    <property type="taxonomic scope" value="Eukaryota"/>
</dbReference>
<dbReference type="HOGENOM" id="CLU_000315_26_2_1"/>
<dbReference type="InParanoid" id="Q74Z27"/>
<dbReference type="OMA" id="FWKKNER"/>
<dbReference type="OrthoDB" id="372624at2759"/>
<dbReference type="Proteomes" id="UP000000591">
    <property type="component" value="Chromosome VII"/>
</dbReference>
<dbReference type="GO" id="GO:0000775">
    <property type="term" value="C:chromosome, centromeric region"/>
    <property type="evidence" value="ECO:0007669"/>
    <property type="project" value="EnsemblFungi"/>
</dbReference>
<dbReference type="GO" id="GO:0000781">
    <property type="term" value="C:chromosome, telomeric region"/>
    <property type="evidence" value="ECO:0007669"/>
    <property type="project" value="GOC"/>
</dbReference>
<dbReference type="GO" id="GO:0031011">
    <property type="term" value="C:Ino80 complex"/>
    <property type="evidence" value="ECO:0000318"/>
    <property type="project" value="GO_Central"/>
</dbReference>
<dbReference type="GO" id="GO:0005524">
    <property type="term" value="F:ATP binding"/>
    <property type="evidence" value="ECO:0007669"/>
    <property type="project" value="UniProtKB-KW"/>
</dbReference>
<dbReference type="GO" id="GO:0016887">
    <property type="term" value="F:ATP hydrolysis activity"/>
    <property type="evidence" value="ECO:0000318"/>
    <property type="project" value="GO_Central"/>
</dbReference>
<dbReference type="GO" id="GO:0140658">
    <property type="term" value="F:ATP-dependent chromatin remodeler activity"/>
    <property type="evidence" value="ECO:0007669"/>
    <property type="project" value="InterPro"/>
</dbReference>
<dbReference type="GO" id="GO:0003677">
    <property type="term" value="F:DNA binding"/>
    <property type="evidence" value="ECO:0007669"/>
    <property type="project" value="UniProtKB-KW"/>
</dbReference>
<dbReference type="GO" id="GO:0042393">
    <property type="term" value="F:histone binding"/>
    <property type="evidence" value="ECO:0000318"/>
    <property type="project" value="GO_Central"/>
</dbReference>
<dbReference type="GO" id="GO:0034080">
    <property type="term" value="P:CENP-A containing chromatin assembly"/>
    <property type="evidence" value="ECO:0007669"/>
    <property type="project" value="EnsemblFungi"/>
</dbReference>
<dbReference type="GO" id="GO:0006338">
    <property type="term" value="P:chromatin remodeling"/>
    <property type="evidence" value="ECO:0000318"/>
    <property type="project" value="GO_Central"/>
</dbReference>
<dbReference type="GO" id="GO:0006281">
    <property type="term" value="P:DNA repair"/>
    <property type="evidence" value="ECO:0000318"/>
    <property type="project" value="GO_Central"/>
</dbReference>
<dbReference type="GO" id="GO:0045944">
    <property type="term" value="P:positive regulation of transcription by RNA polymerase II"/>
    <property type="evidence" value="ECO:0007669"/>
    <property type="project" value="EnsemblFungi"/>
</dbReference>
<dbReference type="GO" id="GO:0032006">
    <property type="term" value="P:regulation of TOR signaling"/>
    <property type="evidence" value="ECO:0007669"/>
    <property type="project" value="EnsemblFungi"/>
</dbReference>
<dbReference type="GO" id="GO:0031509">
    <property type="term" value="P:subtelomeric heterochromatin formation"/>
    <property type="evidence" value="ECO:0007669"/>
    <property type="project" value="EnsemblFungi"/>
</dbReference>
<dbReference type="GO" id="GO:0000722">
    <property type="term" value="P:telomere maintenance via recombination"/>
    <property type="evidence" value="ECO:0007669"/>
    <property type="project" value="EnsemblFungi"/>
</dbReference>
<dbReference type="GO" id="GO:0006366">
    <property type="term" value="P:transcription by RNA polymerase II"/>
    <property type="evidence" value="ECO:0007669"/>
    <property type="project" value="EnsemblFungi"/>
</dbReference>
<dbReference type="CDD" id="cd18002">
    <property type="entry name" value="DEXQc_INO80"/>
    <property type="match status" value="1"/>
</dbReference>
<dbReference type="CDD" id="cd18793">
    <property type="entry name" value="SF2_C_SNF"/>
    <property type="match status" value="1"/>
</dbReference>
<dbReference type="FunFam" id="3.40.50.10810:FF:000022">
    <property type="entry name" value="Blast:Putative DNA helicase Ino80"/>
    <property type="match status" value="1"/>
</dbReference>
<dbReference type="FunFam" id="3.40.50.300:FF:002592">
    <property type="entry name" value="SNF2 family helicase Ino80"/>
    <property type="match status" value="1"/>
</dbReference>
<dbReference type="Gene3D" id="3.40.50.300">
    <property type="entry name" value="P-loop containing nucleotide triphosphate hydrolases"/>
    <property type="match status" value="1"/>
</dbReference>
<dbReference type="Gene3D" id="3.40.50.10810">
    <property type="entry name" value="Tandem AAA-ATPase domain"/>
    <property type="match status" value="1"/>
</dbReference>
<dbReference type="InterPro" id="IPR020838">
    <property type="entry name" value="DBINO"/>
</dbReference>
<dbReference type="InterPro" id="IPR031047">
    <property type="entry name" value="DEXQc_INO80"/>
</dbReference>
<dbReference type="InterPro" id="IPR014001">
    <property type="entry name" value="Helicase_ATP-bd"/>
</dbReference>
<dbReference type="InterPro" id="IPR001650">
    <property type="entry name" value="Helicase_C-like"/>
</dbReference>
<dbReference type="InterPro" id="IPR050520">
    <property type="entry name" value="INO80/SWR1_helicase"/>
</dbReference>
<dbReference type="InterPro" id="IPR027417">
    <property type="entry name" value="P-loop_NTPase"/>
</dbReference>
<dbReference type="InterPro" id="IPR038718">
    <property type="entry name" value="SNF2-like_sf"/>
</dbReference>
<dbReference type="InterPro" id="IPR049730">
    <property type="entry name" value="SNF2/RAD54-like_C"/>
</dbReference>
<dbReference type="InterPro" id="IPR000330">
    <property type="entry name" value="SNF2_N"/>
</dbReference>
<dbReference type="PANTHER" id="PTHR45685:SF2">
    <property type="entry name" value="CHROMATIN-REMODELING ATPASE INO80"/>
    <property type="match status" value="1"/>
</dbReference>
<dbReference type="PANTHER" id="PTHR45685">
    <property type="entry name" value="HELICASE SRCAP-RELATED"/>
    <property type="match status" value="1"/>
</dbReference>
<dbReference type="Pfam" id="PF13892">
    <property type="entry name" value="DBINO"/>
    <property type="match status" value="1"/>
</dbReference>
<dbReference type="Pfam" id="PF00271">
    <property type="entry name" value="Helicase_C"/>
    <property type="match status" value="1"/>
</dbReference>
<dbReference type="Pfam" id="PF00176">
    <property type="entry name" value="SNF2-rel_dom"/>
    <property type="match status" value="1"/>
</dbReference>
<dbReference type="SMART" id="SM00487">
    <property type="entry name" value="DEXDc"/>
    <property type="match status" value="1"/>
</dbReference>
<dbReference type="SMART" id="SM00490">
    <property type="entry name" value="HELICc"/>
    <property type="match status" value="1"/>
</dbReference>
<dbReference type="SUPFAM" id="SSF52540">
    <property type="entry name" value="P-loop containing nucleoside triphosphate hydrolases"/>
    <property type="match status" value="2"/>
</dbReference>
<dbReference type="PROSITE" id="PS51413">
    <property type="entry name" value="DBINO"/>
    <property type="match status" value="1"/>
</dbReference>
<dbReference type="PROSITE" id="PS51192">
    <property type="entry name" value="HELICASE_ATP_BIND_1"/>
    <property type="match status" value="1"/>
</dbReference>
<dbReference type="PROSITE" id="PS51194">
    <property type="entry name" value="HELICASE_CTER"/>
    <property type="match status" value="1"/>
</dbReference>
<accession>Q74Z27</accession>
<comment type="function">
    <text evidence="6">ATPase component of the INO80 complex which remodels chromatin by shifting nucleosomes and is involved in DNA repair.</text>
</comment>
<comment type="catalytic activity">
    <reaction evidence="1">
        <text>ATP + H2O = ADP + phosphate + H(+)</text>
        <dbReference type="Rhea" id="RHEA:13065"/>
        <dbReference type="ChEBI" id="CHEBI:15377"/>
        <dbReference type="ChEBI" id="CHEBI:15378"/>
        <dbReference type="ChEBI" id="CHEBI:30616"/>
        <dbReference type="ChEBI" id="CHEBI:43474"/>
        <dbReference type="ChEBI" id="CHEBI:456216"/>
    </reaction>
</comment>
<comment type="subunit">
    <text evidence="6">Component of the INO80 chromatin-remodeling complex.</text>
</comment>
<comment type="subcellular location">
    <subcellularLocation>
        <location evidence="6">Nucleus</location>
    </subcellularLocation>
</comment>
<comment type="domain">
    <text evidence="2">The DBINO region is involved in binding to DNA.</text>
</comment>
<comment type="similarity">
    <text evidence="8">Belongs to the SNF2/RAD54 helicase family.</text>
</comment>
<feature type="chain" id="PRO_0000074318" description="Chromatin-remodeling ATPase INO80">
    <location>
        <begin position="1"/>
        <end position="1414"/>
    </location>
</feature>
<feature type="domain" description="DBINO" evidence="6">
    <location>
        <begin position="429"/>
        <end position="554"/>
    </location>
</feature>
<feature type="domain" description="Helicase ATP-binding" evidence="4">
    <location>
        <begin position="667"/>
        <end position="839"/>
    </location>
</feature>
<feature type="domain" description="Helicase C-terminal" evidence="5">
    <location>
        <begin position="1244"/>
        <end position="1398"/>
    </location>
</feature>
<feature type="region of interest" description="Disordered" evidence="7">
    <location>
        <begin position="106"/>
        <end position="252"/>
    </location>
</feature>
<feature type="region of interest" description="Disordered" evidence="7">
    <location>
        <begin position="330"/>
        <end position="396"/>
    </location>
</feature>
<feature type="coiled-coil region" evidence="3">
    <location>
        <begin position="265"/>
        <end position="341"/>
    </location>
</feature>
<feature type="short sequence motif" description="DEAQ box">
    <location>
        <begin position="790"/>
        <end position="793"/>
    </location>
</feature>
<feature type="compositionally biased region" description="Basic and acidic residues" evidence="7">
    <location>
        <begin position="106"/>
        <end position="128"/>
    </location>
</feature>
<feature type="compositionally biased region" description="Basic residues" evidence="7">
    <location>
        <begin position="129"/>
        <end position="142"/>
    </location>
</feature>
<feature type="compositionally biased region" description="Low complexity" evidence="7">
    <location>
        <begin position="154"/>
        <end position="173"/>
    </location>
</feature>
<feature type="compositionally biased region" description="Basic and acidic residues" evidence="7">
    <location>
        <begin position="175"/>
        <end position="186"/>
    </location>
</feature>
<feature type="compositionally biased region" description="Acidic residues" evidence="7">
    <location>
        <begin position="187"/>
        <end position="236"/>
    </location>
</feature>
<feature type="compositionally biased region" description="Low complexity" evidence="7">
    <location>
        <begin position="350"/>
        <end position="361"/>
    </location>
</feature>
<feature type="binding site" evidence="4">
    <location>
        <begin position="681"/>
        <end position="687"/>
    </location>
    <ligand>
        <name>ATP</name>
        <dbReference type="ChEBI" id="CHEBI:30616"/>
    </ligand>
</feature>
<reference key="1">
    <citation type="journal article" date="2004" name="Science">
        <title>The Ashbya gossypii genome as a tool for mapping the ancient Saccharomyces cerevisiae genome.</title>
        <authorList>
            <person name="Dietrich F.S."/>
            <person name="Voegeli S."/>
            <person name="Brachat S."/>
            <person name="Lerch A."/>
            <person name="Gates K."/>
            <person name="Steiner S."/>
            <person name="Mohr C."/>
            <person name="Poehlmann R."/>
            <person name="Luedi P."/>
            <person name="Choi S."/>
            <person name="Wing R.A."/>
            <person name="Flavier A."/>
            <person name="Gaffney T.D."/>
            <person name="Philippsen P."/>
        </authorList>
    </citation>
    <scope>NUCLEOTIDE SEQUENCE [LARGE SCALE GENOMIC DNA]</scope>
    <source>
        <strain>ATCC 10895 / CBS 109.51 / FGSC 9923 / NRRL Y-1056</strain>
    </source>
</reference>
<reference key="2">
    <citation type="journal article" date="2013" name="G3 (Bethesda)">
        <title>Genomes of Ashbya fungi isolated from insects reveal four mating-type loci, numerous translocations, lack of transposons, and distinct gene duplications.</title>
        <authorList>
            <person name="Dietrich F.S."/>
            <person name="Voegeli S."/>
            <person name="Kuo S."/>
            <person name="Philippsen P."/>
        </authorList>
    </citation>
    <scope>GENOME REANNOTATION</scope>
    <scope>SEQUENCE REVISION TO 123; 205 AND 544</scope>
    <source>
        <strain>ATCC 10895 / CBS 109.51 / FGSC 9923 / NRRL Y-1056</strain>
    </source>
</reference>
<sequence length="1414" mass="161209">MSLEALLNKEEKGSGAAREAFMRRMNERFNSVCHKDAREQQYQDWKYLSYQEFELVNEWSAASRELTVNQCGQLLSNVKSAQAEWLAYEEFVAGRARLVAEVEAKREREQEEQEERQPARAKTKERARARGTAKRAVGRKATKAPAAPAEQEGGVPAARAAAKAPVRAEGAAEPPLKRELSGAKLEDEGEGEDDDEEEDEDDEDDEDEDEDEDEEEEEEEELEELEDIQLLDDDNDKDFSPEGGRSKSSIKLNTKLDINSDIALIQRELLKMAQKHKSAKAKKRKFTSCVVQRYDSDHTRLEVKVTLKQLHIKRLKRLLNEAKRKRAAEEALAANEQQGNLAKRRKTAQKQKPAANGAPAASSSEDVTVTEAATPVPAKVNGEAPSNESPVAAIPDINPTTGLPTYGMKMTAKEARAIQRHYDTTYITVWKDMARKDSAKLSRLVQQIQSIRSANFKKTSSLVAREARKWQSRNFRQVKDFQTRARRGVREMSSFWKKNEREERELKKRAEREAIEQAKKEEEERESKRQARKLNFLLTQTELYSHFIGSKIKTNELEGNMADSNLATAPDVSAIDLSKPPTRKNEVHTIDFDNEDDEELHRKAAQNASNALKETREKAKAFDGMSGDDEELNFQNPTSLGEITIEQPKILACTLKEYQLKGLNWLANLYDQGINGILADEMGLGKTVQSISVLAHLAERYNIWGPFIVVTPASTLHNWVNEIQKFVPDFKILPYWGNGNDRKILRRFWDRKHLRYSKDAPFHVMITSYQMIVSDAAYLQKMKWQYMILDEAQAIKSSQSSRWKNLLSFHCRNRLLLTGTPIQNSMQELWALLHFIMPSLFDSHDEFNDWFSKDIESHAQSNTQLNQQQLRRLHMILKPFMLRRIKKNVQSELGDKIEIDVMCDLTHRQAKLYQVLKSQVSASYDAIENAASNSSGDDSGNMSLSDSKIMNTVMEFRKVCNHPDLFERADVSSPFSFTSFGQTGSIMREGDVIDVQYSSKNPVSFHLPRLIYDDLILPNYNHDSDMRTKILNHMMSIFAPANSPDLCATLSKVAGVEPNSILRLSQEHIVKRAIDLSAHSPNVTRSGIFSVVYEDDKSSLSSLDKTLLINDKSDYLHTIARTTQNGVLASLLNIQGNFYENEYMNVLRPAYRPAAAAPPISIHVMGSSNFSIKRDNALFEPYITRSLGIIPPELQTRLTEKENNIFTALPISELYPAPLNKSFSSYISMPSMDRFITESAKLKKLDELLVRLKAGEHRVLIYFQMTRMMDLIEEYLTYRQYKHIRLDGSSKLEDRRDLVHDWQTKSDIFIFLLSTRAGGLGINLTSADTVIFYDSDWNPTIDSQAMDRAHRLGQTKQVTVYRLLIKGTIEERMRDRAKQKEHVQQVVMEGKTKENNVQTITANGKTLENLPLPL</sequence>
<keyword id="KW-0010">Activator</keyword>
<keyword id="KW-0067">ATP-binding</keyword>
<keyword id="KW-0175">Coiled coil</keyword>
<keyword id="KW-0227">DNA damage</keyword>
<keyword id="KW-0234">DNA repair</keyword>
<keyword id="KW-0238">DNA-binding</keyword>
<keyword id="KW-0378">Hydrolase</keyword>
<keyword id="KW-0547">Nucleotide-binding</keyword>
<keyword id="KW-0539">Nucleus</keyword>
<keyword id="KW-1185">Reference proteome</keyword>
<keyword id="KW-0804">Transcription</keyword>
<keyword id="KW-0805">Transcription regulation</keyword>